<feature type="signal peptide" evidence="2">
    <location>
        <begin position="1"/>
        <end position="21"/>
    </location>
</feature>
<feature type="propeptide" id="PRO_0000027140" evidence="2">
    <location>
        <begin position="22"/>
        <end position="108"/>
    </location>
</feature>
<feature type="chain" id="PRO_0000027141" description="Proteinase R">
    <location>
        <begin position="109"/>
        <end position="387"/>
    </location>
</feature>
<feature type="domain" description="Inhibitor I9" evidence="2">
    <location>
        <begin position="42"/>
        <end position="107"/>
    </location>
</feature>
<feature type="domain" description="Peptidase S8" evidence="3">
    <location>
        <begin position="115"/>
        <end position="387"/>
    </location>
</feature>
<feature type="active site" description="Charge relay system" evidence="3">
    <location>
        <position position="147"/>
    </location>
</feature>
<feature type="active site" description="Charge relay system" evidence="3">
    <location>
        <position position="177"/>
    </location>
</feature>
<feature type="active site" description="Charge relay system" evidence="3">
    <location>
        <position position="332"/>
    </location>
</feature>
<feature type="binding site" evidence="1">
    <location>
        <position position="124"/>
    </location>
    <ligand>
        <name>Ca(2+)</name>
        <dbReference type="ChEBI" id="CHEBI:29108"/>
        <label>2</label>
    </ligand>
</feature>
<feature type="binding site" evidence="1">
    <location>
        <position position="308"/>
    </location>
    <ligand>
        <name>Ca(2+)</name>
        <dbReference type="ChEBI" id="CHEBI:29108"/>
        <label>1</label>
    </ligand>
</feature>
<feature type="binding site" evidence="1">
    <location>
        <position position="368"/>
    </location>
    <ligand>
        <name>Ca(2+)</name>
        <dbReference type="ChEBI" id="CHEBI:29108"/>
        <label>2</label>
    </ligand>
</feature>
<feature type="disulfide bond" evidence="1">
    <location>
        <begin position="142"/>
        <end position="231"/>
    </location>
</feature>
<feature type="disulfide bond" evidence="1">
    <location>
        <begin position="286"/>
        <end position="357"/>
    </location>
</feature>
<proteinExistence type="evidence at protein level"/>
<name>PRTR_PARAQ</name>
<protein>
    <recommendedName>
        <fullName>Proteinase R</fullName>
        <ecNumber>3.4.21.-</ecNumber>
    </recommendedName>
</protein>
<dbReference type="EC" id="3.4.21.-"/>
<dbReference type="EMBL" id="X56116">
    <property type="protein sequence ID" value="CAA39584.1"/>
    <property type="molecule type" value="mRNA"/>
</dbReference>
<dbReference type="PIR" id="S11985">
    <property type="entry name" value="S11985"/>
</dbReference>
<dbReference type="SMR" id="P23653"/>
<dbReference type="MEROPS" id="S08.054"/>
<dbReference type="GO" id="GO:0005576">
    <property type="term" value="C:extracellular region"/>
    <property type="evidence" value="ECO:0007669"/>
    <property type="project" value="UniProtKB-ARBA"/>
</dbReference>
<dbReference type="GO" id="GO:0046872">
    <property type="term" value="F:metal ion binding"/>
    <property type="evidence" value="ECO:0007669"/>
    <property type="project" value="UniProtKB-KW"/>
</dbReference>
<dbReference type="GO" id="GO:0004252">
    <property type="term" value="F:serine-type endopeptidase activity"/>
    <property type="evidence" value="ECO:0007669"/>
    <property type="project" value="InterPro"/>
</dbReference>
<dbReference type="GO" id="GO:0006508">
    <property type="term" value="P:proteolysis"/>
    <property type="evidence" value="ECO:0007669"/>
    <property type="project" value="UniProtKB-KW"/>
</dbReference>
<dbReference type="CDD" id="cd04077">
    <property type="entry name" value="Peptidases_S8_PCSK9_ProteinaseK_like"/>
    <property type="match status" value="1"/>
</dbReference>
<dbReference type="FunFam" id="3.40.50.200:FF:000014">
    <property type="entry name" value="Proteinase K"/>
    <property type="match status" value="1"/>
</dbReference>
<dbReference type="Gene3D" id="3.30.70.80">
    <property type="entry name" value="Peptidase S8 propeptide/proteinase inhibitor I9"/>
    <property type="match status" value="1"/>
</dbReference>
<dbReference type="Gene3D" id="3.40.50.200">
    <property type="entry name" value="Peptidase S8/S53 domain"/>
    <property type="match status" value="1"/>
</dbReference>
<dbReference type="InterPro" id="IPR034193">
    <property type="entry name" value="PCSK9_ProteinaseK-like"/>
</dbReference>
<dbReference type="InterPro" id="IPR000209">
    <property type="entry name" value="Peptidase_S8/S53_dom"/>
</dbReference>
<dbReference type="InterPro" id="IPR036852">
    <property type="entry name" value="Peptidase_S8/S53_dom_sf"/>
</dbReference>
<dbReference type="InterPro" id="IPR023827">
    <property type="entry name" value="Peptidase_S8_Asp-AS"/>
</dbReference>
<dbReference type="InterPro" id="IPR022398">
    <property type="entry name" value="Peptidase_S8_His-AS"/>
</dbReference>
<dbReference type="InterPro" id="IPR023828">
    <property type="entry name" value="Peptidase_S8_Ser-AS"/>
</dbReference>
<dbReference type="InterPro" id="IPR050131">
    <property type="entry name" value="Peptidase_S8_subtilisin-like"/>
</dbReference>
<dbReference type="InterPro" id="IPR015500">
    <property type="entry name" value="Peptidase_S8_subtilisin-rel"/>
</dbReference>
<dbReference type="InterPro" id="IPR010259">
    <property type="entry name" value="S8pro/Inhibitor_I9"/>
</dbReference>
<dbReference type="InterPro" id="IPR037045">
    <property type="entry name" value="S8pro/Inhibitor_I9_sf"/>
</dbReference>
<dbReference type="PANTHER" id="PTHR43806:SF58">
    <property type="entry name" value="ALKALINE PROTEASE 1-RELATED"/>
    <property type="match status" value="1"/>
</dbReference>
<dbReference type="PANTHER" id="PTHR43806">
    <property type="entry name" value="PEPTIDASE S8"/>
    <property type="match status" value="1"/>
</dbReference>
<dbReference type="Pfam" id="PF05922">
    <property type="entry name" value="Inhibitor_I9"/>
    <property type="match status" value="1"/>
</dbReference>
<dbReference type="Pfam" id="PF00082">
    <property type="entry name" value="Peptidase_S8"/>
    <property type="match status" value="1"/>
</dbReference>
<dbReference type="PRINTS" id="PR00723">
    <property type="entry name" value="SUBTILISIN"/>
</dbReference>
<dbReference type="SUPFAM" id="SSF54897">
    <property type="entry name" value="Protease propeptides/inhibitors"/>
    <property type="match status" value="1"/>
</dbReference>
<dbReference type="SUPFAM" id="SSF52743">
    <property type="entry name" value="Subtilisin-like"/>
    <property type="match status" value="1"/>
</dbReference>
<dbReference type="PROSITE" id="PS51892">
    <property type="entry name" value="SUBTILASE"/>
    <property type="match status" value="1"/>
</dbReference>
<dbReference type="PROSITE" id="PS00136">
    <property type="entry name" value="SUBTILASE_ASP"/>
    <property type="match status" value="1"/>
</dbReference>
<dbReference type="PROSITE" id="PS00137">
    <property type="entry name" value="SUBTILASE_HIS"/>
    <property type="match status" value="1"/>
</dbReference>
<dbReference type="PROSITE" id="PS00138">
    <property type="entry name" value="SUBTILASE_SER"/>
    <property type="match status" value="1"/>
</dbReference>
<reference key="1">
    <citation type="journal article" date="1990" name="Mol. Microbiol.">
        <title>Isolation and characterization of the gene encoding a novel, thermostable serine proteinase from the mould Tritirachium album Limber.</title>
        <authorList>
            <person name="Samal B.B."/>
            <person name="Karan B."/>
            <person name="Boone T.C."/>
            <person name="Osslund T.D."/>
            <person name="Chen K.K."/>
            <person name="Stabinsky Y."/>
        </authorList>
    </citation>
    <scope>NUCLEOTIDE SEQUENCE [MRNA]</scope>
    <source>
        <strain>ATCC 22563 / Limber</strain>
    </source>
</reference>
<organism>
    <name type="scientific">Parengyodontium album</name>
    <name type="common">Tritirachium album</name>
    <dbReference type="NCBI Taxonomy" id="37998"/>
    <lineage>
        <taxon>Eukaryota</taxon>
        <taxon>Fungi</taxon>
        <taxon>Dikarya</taxon>
        <taxon>Ascomycota</taxon>
        <taxon>Pezizomycotina</taxon>
        <taxon>Sordariomycetes</taxon>
        <taxon>Hypocreomycetidae</taxon>
        <taxon>Hypocreales</taxon>
        <taxon>Cordycipitaceae</taxon>
        <taxon>Parengyodontium</taxon>
    </lineage>
</organism>
<sequence>MRLSILLGLLPLAPRPPAVDAVEQRSEPAPLIEAQGEMIADKYIVKLKEGSALASLDAAMEKLSGKADHVYKNIFKGFAASLDEKMVEVLRAHPDVEYIEQDAIVNINAEQRNAPWGLARISSTSPGTSTYRYDDSAGQGTCVYVIDTGVEASHPEFEGRAQMVKTYYASSRDGNGHGTHCAGTIGSRTYGVAKKTQIFGVKVLNDQGSGQYSTIISGMDFVANDYRNRNCPNGVVASMSIGGGYSSSVNSAAANLQQSGVMVAVAAGNNNADARNYSPASESSICTVGATDRYDRRSSFSNYGSVLDIFAPGTDILSTWIGGSTRSISGTSMATPHVAGLAAYLMTLGRATASNACRYIAQTANQGDLSNISFGTVNLLAYNNYQG</sequence>
<gene>
    <name type="primary">PROR</name>
</gene>
<comment type="function">
    <text>Serine proteinase.</text>
</comment>
<comment type="cofactor">
    <cofactor evidence="1">
        <name>Ca(2+)</name>
        <dbReference type="ChEBI" id="CHEBI:29108"/>
    </cofactor>
    <text evidence="1">Binds 2 calcium ions per subunit.</text>
</comment>
<comment type="biophysicochemical properties">
    <temperatureDependence>
        <text>Thermostable.</text>
    </temperatureDependence>
</comment>
<comment type="similarity">
    <text evidence="4">Belongs to the peptidase S8 family.</text>
</comment>
<accession>P23653</accession>
<evidence type="ECO:0000250" key="1"/>
<evidence type="ECO:0000255" key="2"/>
<evidence type="ECO:0000255" key="3">
    <source>
        <dbReference type="PROSITE-ProRule" id="PRU01240"/>
    </source>
</evidence>
<evidence type="ECO:0000305" key="4"/>
<keyword id="KW-0106">Calcium</keyword>
<keyword id="KW-1015">Disulfide bond</keyword>
<keyword id="KW-0378">Hydrolase</keyword>
<keyword id="KW-0479">Metal-binding</keyword>
<keyword id="KW-0645">Protease</keyword>
<keyword id="KW-0720">Serine protease</keyword>
<keyword id="KW-0732">Signal</keyword>
<keyword id="KW-0865">Zymogen</keyword>